<accession>Q0BYJ5</accession>
<organism>
    <name type="scientific">Hyphomonas neptunium (strain ATCC 15444)</name>
    <dbReference type="NCBI Taxonomy" id="228405"/>
    <lineage>
        <taxon>Bacteria</taxon>
        <taxon>Pseudomonadati</taxon>
        <taxon>Pseudomonadota</taxon>
        <taxon>Alphaproteobacteria</taxon>
        <taxon>Hyphomonadales</taxon>
        <taxon>Hyphomonadaceae</taxon>
        <taxon>Hyphomonas</taxon>
    </lineage>
</organism>
<dbReference type="EC" id="2.8.1.-" evidence="1"/>
<dbReference type="EMBL" id="CP000158">
    <property type="protein sequence ID" value="ABI75739.1"/>
    <property type="molecule type" value="Genomic_DNA"/>
</dbReference>
<dbReference type="RefSeq" id="WP_011647745.1">
    <property type="nucleotide sequence ID" value="NC_008358.1"/>
</dbReference>
<dbReference type="SMR" id="Q0BYJ5"/>
<dbReference type="STRING" id="228405.HNE_2769"/>
<dbReference type="KEGG" id="hne:HNE_2769"/>
<dbReference type="eggNOG" id="COG0037">
    <property type="taxonomic scope" value="Bacteria"/>
</dbReference>
<dbReference type="HOGENOM" id="CLU_026481_0_0_5"/>
<dbReference type="Proteomes" id="UP000001959">
    <property type="component" value="Chromosome"/>
</dbReference>
<dbReference type="GO" id="GO:0005737">
    <property type="term" value="C:cytoplasm"/>
    <property type="evidence" value="ECO:0007669"/>
    <property type="project" value="UniProtKB-SubCell"/>
</dbReference>
<dbReference type="GO" id="GO:0051539">
    <property type="term" value="F:4 iron, 4 sulfur cluster binding"/>
    <property type="evidence" value="ECO:0007669"/>
    <property type="project" value="UniProtKB-UniRule"/>
</dbReference>
<dbReference type="GO" id="GO:0005524">
    <property type="term" value="F:ATP binding"/>
    <property type="evidence" value="ECO:0007669"/>
    <property type="project" value="UniProtKB-UniRule"/>
</dbReference>
<dbReference type="GO" id="GO:0000287">
    <property type="term" value="F:magnesium ion binding"/>
    <property type="evidence" value="ECO:0007669"/>
    <property type="project" value="UniProtKB-UniRule"/>
</dbReference>
<dbReference type="GO" id="GO:0016783">
    <property type="term" value="F:sulfurtransferase activity"/>
    <property type="evidence" value="ECO:0007669"/>
    <property type="project" value="UniProtKB-UniRule"/>
</dbReference>
<dbReference type="GO" id="GO:0000049">
    <property type="term" value="F:tRNA binding"/>
    <property type="evidence" value="ECO:0007669"/>
    <property type="project" value="UniProtKB-KW"/>
</dbReference>
<dbReference type="GO" id="GO:0034227">
    <property type="term" value="P:tRNA thio-modification"/>
    <property type="evidence" value="ECO:0007669"/>
    <property type="project" value="UniProtKB-UniRule"/>
</dbReference>
<dbReference type="CDD" id="cd24138">
    <property type="entry name" value="TtcA-like"/>
    <property type="match status" value="1"/>
</dbReference>
<dbReference type="Gene3D" id="3.40.50.620">
    <property type="entry name" value="HUPs"/>
    <property type="match status" value="1"/>
</dbReference>
<dbReference type="HAMAP" id="MF_01850">
    <property type="entry name" value="TtcA"/>
    <property type="match status" value="1"/>
</dbReference>
<dbReference type="InterPro" id="IPR014729">
    <property type="entry name" value="Rossmann-like_a/b/a_fold"/>
</dbReference>
<dbReference type="InterPro" id="IPR011063">
    <property type="entry name" value="TilS/TtcA_N"/>
</dbReference>
<dbReference type="InterPro" id="IPR012089">
    <property type="entry name" value="tRNA_Cyd_32_2_STrfase"/>
</dbReference>
<dbReference type="NCBIfam" id="NF007972">
    <property type="entry name" value="PRK10696.1"/>
    <property type="match status" value="1"/>
</dbReference>
<dbReference type="PANTHER" id="PTHR43686:SF1">
    <property type="entry name" value="AMINOTRAN_5 DOMAIN-CONTAINING PROTEIN"/>
    <property type="match status" value="1"/>
</dbReference>
<dbReference type="PANTHER" id="PTHR43686">
    <property type="entry name" value="SULFURTRANSFERASE-RELATED"/>
    <property type="match status" value="1"/>
</dbReference>
<dbReference type="Pfam" id="PF01171">
    <property type="entry name" value="ATP_bind_3"/>
    <property type="match status" value="1"/>
</dbReference>
<dbReference type="SUPFAM" id="SSF52402">
    <property type="entry name" value="Adenine nucleotide alpha hydrolases-like"/>
    <property type="match status" value="1"/>
</dbReference>
<sequence length="295" mass="32768">MADTSLSPVLPLFANTPSSVSFKKLRKRLVRGALEVIDTYGLVDRRAIETGEKPHPKWLVCLSGGKDSYGLLAVLLDLQWQGALPVDLIACNLDQGQPGFPKHILPEWLTQNGVTHKIITEDTYSIVTDKVPEGRTYCSMCSRLRRGILYRVAREEGCEAIVLGHHRDDALATFMMNLIHGGRLAAMPPKLLNDDGDVQVFRPLITAAEDDLAKFAEAMEFPIIPCNLCGSQDGLQRVVMNRMLDEWERKKPGTRQVMAKALTNVRPSHLHDPRVFDFAGLMLGGKGEDDPNVPF</sequence>
<evidence type="ECO:0000255" key="1">
    <source>
        <dbReference type="HAMAP-Rule" id="MF_01850"/>
    </source>
</evidence>
<feature type="chain" id="PRO_0000348754" description="tRNA-cytidine(32) 2-sulfurtransferase">
    <location>
        <begin position="1"/>
        <end position="295"/>
    </location>
</feature>
<feature type="short sequence motif" description="PP-loop motif" evidence="1">
    <location>
        <begin position="63"/>
        <end position="68"/>
    </location>
</feature>
<feature type="binding site" evidence="1">
    <location>
        <position position="138"/>
    </location>
    <ligand>
        <name>[4Fe-4S] cluster</name>
        <dbReference type="ChEBI" id="CHEBI:49883"/>
    </ligand>
</feature>
<feature type="binding site" evidence="1">
    <location>
        <position position="141"/>
    </location>
    <ligand>
        <name>[4Fe-4S] cluster</name>
        <dbReference type="ChEBI" id="CHEBI:49883"/>
    </ligand>
</feature>
<feature type="binding site" evidence="1">
    <location>
        <position position="229"/>
    </location>
    <ligand>
        <name>[4Fe-4S] cluster</name>
        <dbReference type="ChEBI" id="CHEBI:49883"/>
    </ligand>
</feature>
<reference key="1">
    <citation type="journal article" date="2006" name="J. Bacteriol.">
        <title>Comparative genomic evidence for a close relationship between the dimorphic prosthecate bacteria Hyphomonas neptunium and Caulobacter crescentus.</title>
        <authorList>
            <person name="Badger J.H."/>
            <person name="Hoover T.R."/>
            <person name="Brun Y.V."/>
            <person name="Weiner R.M."/>
            <person name="Laub M.T."/>
            <person name="Alexandre G."/>
            <person name="Mrazek J."/>
            <person name="Ren Q."/>
            <person name="Paulsen I.T."/>
            <person name="Nelson K.E."/>
            <person name="Khouri H.M."/>
            <person name="Radune D."/>
            <person name="Sosa J."/>
            <person name="Dodson R.J."/>
            <person name="Sullivan S.A."/>
            <person name="Rosovitz M.J."/>
            <person name="Madupu R."/>
            <person name="Brinkac L.M."/>
            <person name="Durkin A.S."/>
            <person name="Daugherty S.C."/>
            <person name="Kothari S.P."/>
            <person name="Giglio M.G."/>
            <person name="Zhou L."/>
            <person name="Haft D.H."/>
            <person name="Selengut J.D."/>
            <person name="Davidsen T.M."/>
            <person name="Yang Q."/>
            <person name="Zafar N."/>
            <person name="Ward N.L."/>
        </authorList>
    </citation>
    <scope>NUCLEOTIDE SEQUENCE [LARGE SCALE GENOMIC DNA]</scope>
    <source>
        <strain>ATCC 15444</strain>
    </source>
</reference>
<proteinExistence type="inferred from homology"/>
<name>TTCA_HYPNA</name>
<keyword id="KW-0004">4Fe-4S</keyword>
<keyword id="KW-0067">ATP-binding</keyword>
<keyword id="KW-0963">Cytoplasm</keyword>
<keyword id="KW-0408">Iron</keyword>
<keyword id="KW-0411">Iron-sulfur</keyword>
<keyword id="KW-0460">Magnesium</keyword>
<keyword id="KW-0479">Metal-binding</keyword>
<keyword id="KW-0547">Nucleotide-binding</keyword>
<keyword id="KW-1185">Reference proteome</keyword>
<keyword id="KW-0694">RNA-binding</keyword>
<keyword id="KW-0808">Transferase</keyword>
<keyword id="KW-0819">tRNA processing</keyword>
<keyword id="KW-0820">tRNA-binding</keyword>
<protein>
    <recommendedName>
        <fullName evidence="1">tRNA-cytidine(32) 2-sulfurtransferase</fullName>
        <ecNumber evidence="1">2.8.1.-</ecNumber>
    </recommendedName>
    <alternativeName>
        <fullName evidence="1">Two-thiocytidine biosynthesis protein A</fullName>
    </alternativeName>
    <alternativeName>
        <fullName evidence="1">tRNA 2-thiocytidine biosynthesis protein TtcA</fullName>
    </alternativeName>
</protein>
<comment type="function">
    <text evidence="1">Catalyzes the ATP-dependent 2-thiolation of cytidine in position 32 of tRNA, to form 2-thiocytidine (s(2)C32). The sulfur atoms are provided by the cysteine/cysteine desulfurase (IscS) system.</text>
</comment>
<comment type="catalytic activity">
    <reaction evidence="1">
        <text>cytidine(32) in tRNA + S-sulfanyl-L-cysteinyl-[cysteine desulfurase] + AH2 + ATP = 2-thiocytidine(32) in tRNA + L-cysteinyl-[cysteine desulfurase] + A + AMP + diphosphate + H(+)</text>
        <dbReference type="Rhea" id="RHEA:57048"/>
        <dbReference type="Rhea" id="RHEA-COMP:10288"/>
        <dbReference type="Rhea" id="RHEA-COMP:12157"/>
        <dbReference type="Rhea" id="RHEA-COMP:12158"/>
        <dbReference type="Rhea" id="RHEA-COMP:14821"/>
        <dbReference type="ChEBI" id="CHEBI:13193"/>
        <dbReference type="ChEBI" id="CHEBI:15378"/>
        <dbReference type="ChEBI" id="CHEBI:17499"/>
        <dbReference type="ChEBI" id="CHEBI:29950"/>
        <dbReference type="ChEBI" id="CHEBI:30616"/>
        <dbReference type="ChEBI" id="CHEBI:33019"/>
        <dbReference type="ChEBI" id="CHEBI:61963"/>
        <dbReference type="ChEBI" id="CHEBI:82748"/>
        <dbReference type="ChEBI" id="CHEBI:141453"/>
        <dbReference type="ChEBI" id="CHEBI:456215"/>
    </reaction>
    <physiologicalReaction direction="left-to-right" evidence="1">
        <dbReference type="Rhea" id="RHEA:57049"/>
    </physiologicalReaction>
</comment>
<comment type="cofactor">
    <cofactor evidence="1">
        <name>Mg(2+)</name>
        <dbReference type="ChEBI" id="CHEBI:18420"/>
    </cofactor>
</comment>
<comment type="cofactor">
    <cofactor evidence="1">
        <name>[4Fe-4S] cluster</name>
        <dbReference type="ChEBI" id="CHEBI:49883"/>
    </cofactor>
    <text evidence="1">Binds 1 [4Fe-4S] cluster per subunit. The cluster is chelated by three Cys residues, the fourth Fe has a free coordination site that may bind a sulfur atom transferred from the persulfide of IscS.</text>
</comment>
<comment type="pathway">
    <text evidence="1">tRNA modification.</text>
</comment>
<comment type="subunit">
    <text evidence="1">Homodimer.</text>
</comment>
<comment type="subcellular location">
    <subcellularLocation>
        <location evidence="1">Cytoplasm</location>
    </subcellularLocation>
</comment>
<comment type="miscellaneous">
    <text evidence="1">The thiolation reaction likely consists of two steps: a first activation step by ATP to form an adenylated intermediate of the target base of tRNA, and a second nucleophilic substitution step of the sulfur (S) atom supplied by the hydrosulfide attached to the Fe-S cluster.</text>
</comment>
<comment type="similarity">
    <text evidence="1">Belongs to the TtcA family.</text>
</comment>
<gene>
    <name evidence="1" type="primary">ttcA</name>
    <name type="ordered locus">HNE_2769</name>
</gene>